<keyword id="KW-0046">Antibiotic resistance</keyword>
<keyword id="KW-0997">Cell inner membrane</keyword>
<keyword id="KW-1003">Cell membrane</keyword>
<keyword id="KW-0328">Glycosyltransferase</keyword>
<keyword id="KW-0441">Lipid A biosynthesis</keyword>
<keyword id="KW-0444">Lipid biosynthesis</keyword>
<keyword id="KW-0443">Lipid metabolism</keyword>
<keyword id="KW-0448">Lipopolysaccharide biosynthesis</keyword>
<keyword id="KW-0472">Membrane</keyword>
<keyword id="KW-0808">Transferase</keyword>
<keyword id="KW-0812">Transmembrane</keyword>
<keyword id="KW-1133">Transmembrane helix</keyword>
<comment type="function">
    <text evidence="1">Catalyzes the transfer of 4-deoxy-4-formamido-L-arabinose from UDP to undecaprenyl phosphate. The modified arabinose is attached to lipid A and is required for resistance to polymyxin and cationic antimicrobial peptides.</text>
</comment>
<comment type="catalytic activity">
    <reaction evidence="1">
        <text>UDP-4-deoxy-4-formamido-beta-L-arabinose + di-trans,octa-cis-undecaprenyl phosphate = 4-deoxy-4-formamido-alpha-L-arabinopyranosyl di-trans,octa-cis-undecaprenyl phosphate + UDP</text>
        <dbReference type="Rhea" id="RHEA:27722"/>
        <dbReference type="ChEBI" id="CHEBI:58223"/>
        <dbReference type="ChEBI" id="CHEBI:58709"/>
        <dbReference type="ChEBI" id="CHEBI:58909"/>
        <dbReference type="ChEBI" id="CHEBI:60392"/>
        <dbReference type="EC" id="2.4.2.53"/>
    </reaction>
</comment>
<comment type="pathway">
    <text evidence="1">Glycolipid biosynthesis; 4-amino-4-deoxy-alpha-L-arabinose undecaprenyl phosphate biosynthesis; 4-amino-4-deoxy-alpha-L-arabinose undecaprenyl phosphate from UDP-4-deoxy-4-formamido-beta-L-arabinose and undecaprenyl phosphate: step 1/2.</text>
</comment>
<comment type="pathway">
    <text evidence="1">Bacterial outer membrane biogenesis; lipopolysaccharide biosynthesis.</text>
</comment>
<comment type="subcellular location">
    <subcellularLocation>
        <location evidence="1">Cell inner membrane</location>
        <topology evidence="1">Multi-pass membrane protein</topology>
    </subcellularLocation>
</comment>
<comment type="similarity">
    <text evidence="1">Belongs to the glycosyltransferase 2 family.</text>
</comment>
<protein>
    <recommendedName>
        <fullName evidence="1">Undecaprenyl-phosphate 4-deoxy-4-formamido-L-arabinose transferase</fullName>
        <ecNumber evidence="1">2.4.2.53</ecNumber>
    </recommendedName>
    <alternativeName>
        <fullName evidence="1">Undecaprenyl-phosphate Ara4FN transferase</fullName>
        <shortName evidence="1">Ara4FN transferase</shortName>
    </alternativeName>
</protein>
<proteinExistence type="inferred from homology"/>
<gene>
    <name evidence="1" type="primary">arnC</name>
    <name type="ordered locus">SEN2280</name>
</gene>
<feature type="chain" id="PRO_1000137919" description="Undecaprenyl-phosphate 4-deoxy-4-formamido-L-arabinose transferase">
    <location>
        <begin position="1"/>
        <end position="327"/>
    </location>
</feature>
<feature type="topological domain" description="Cytoplasmic" evidence="1">
    <location>
        <begin position="1"/>
        <end position="235"/>
    </location>
</feature>
<feature type="transmembrane region" description="Helical" evidence="1">
    <location>
        <begin position="236"/>
        <end position="256"/>
    </location>
</feature>
<feature type="topological domain" description="Periplasmic" evidence="1">
    <location>
        <begin position="257"/>
        <end position="269"/>
    </location>
</feature>
<feature type="transmembrane region" description="Helical" evidence="1">
    <location>
        <begin position="270"/>
        <end position="290"/>
    </location>
</feature>
<feature type="topological domain" description="Cytoplasmic" evidence="1">
    <location>
        <begin position="291"/>
        <end position="327"/>
    </location>
</feature>
<organism>
    <name type="scientific">Salmonella enteritidis PT4 (strain P125109)</name>
    <dbReference type="NCBI Taxonomy" id="550537"/>
    <lineage>
        <taxon>Bacteria</taxon>
        <taxon>Pseudomonadati</taxon>
        <taxon>Pseudomonadota</taxon>
        <taxon>Gammaproteobacteria</taxon>
        <taxon>Enterobacterales</taxon>
        <taxon>Enterobacteriaceae</taxon>
        <taxon>Salmonella</taxon>
    </lineage>
</organism>
<evidence type="ECO:0000255" key="1">
    <source>
        <dbReference type="HAMAP-Rule" id="MF_01164"/>
    </source>
</evidence>
<accession>B5R271</accession>
<reference key="1">
    <citation type="journal article" date="2008" name="Genome Res.">
        <title>Comparative genome analysis of Salmonella enteritidis PT4 and Salmonella gallinarum 287/91 provides insights into evolutionary and host adaptation pathways.</title>
        <authorList>
            <person name="Thomson N.R."/>
            <person name="Clayton D.J."/>
            <person name="Windhorst D."/>
            <person name="Vernikos G."/>
            <person name="Davidson S."/>
            <person name="Churcher C."/>
            <person name="Quail M.A."/>
            <person name="Stevens M."/>
            <person name="Jones M.A."/>
            <person name="Watson M."/>
            <person name="Barron A."/>
            <person name="Layton A."/>
            <person name="Pickard D."/>
            <person name="Kingsley R.A."/>
            <person name="Bignell A."/>
            <person name="Clark L."/>
            <person name="Harris B."/>
            <person name="Ormond D."/>
            <person name="Abdellah Z."/>
            <person name="Brooks K."/>
            <person name="Cherevach I."/>
            <person name="Chillingworth T."/>
            <person name="Woodward J."/>
            <person name="Norberczak H."/>
            <person name="Lord A."/>
            <person name="Arrowsmith C."/>
            <person name="Jagels K."/>
            <person name="Moule S."/>
            <person name="Mungall K."/>
            <person name="Saunders M."/>
            <person name="Whitehead S."/>
            <person name="Chabalgoity J.A."/>
            <person name="Maskell D."/>
            <person name="Humphreys T."/>
            <person name="Roberts M."/>
            <person name="Barrow P.A."/>
            <person name="Dougan G."/>
            <person name="Parkhill J."/>
        </authorList>
    </citation>
    <scope>NUCLEOTIDE SEQUENCE [LARGE SCALE GENOMIC DNA]</scope>
    <source>
        <strain>P125109</strain>
    </source>
</reference>
<dbReference type="EC" id="2.4.2.53" evidence="1"/>
<dbReference type="EMBL" id="AM933172">
    <property type="protein sequence ID" value="CAR33864.1"/>
    <property type="molecule type" value="Genomic_DNA"/>
</dbReference>
<dbReference type="RefSeq" id="WP_000458887.1">
    <property type="nucleotide sequence ID" value="NC_011294.1"/>
</dbReference>
<dbReference type="SMR" id="B5R271"/>
<dbReference type="CAZy" id="GT2">
    <property type="family name" value="Glycosyltransferase Family 2"/>
</dbReference>
<dbReference type="KEGG" id="set:SEN2280"/>
<dbReference type="HOGENOM" id="CLU_033536_0_0_6"/>
<dbReference type="UniPathway" id="UPA00030"/>
<dbReference type="UniPathway" id="UPA00036">
    <property type="reaction ID" value="UER00495"/>
</dbReference>
<dbReference type="Proteomes" id="UP000000613">
    <property type="component" value="Chromosome"/>
</dbReference>
<dbReference type="GO" id="GO:0005886">
    <property type="term" value="C:plasma membrane"/>
    <property type="evidence" value="ECO:0007669"/>
    <property type="project" value="UniProtKB-SubCell"/>
</dbReference>
<dbReference type="GO" id="GO:0016780">
    <property type="term" value="F:phosphotransferase activity, for other substituted phosphate groups"/>
    <property type="evidence" value="ECO:0007669"/>
    <property type="project" value="UniProtKB-UniRule"/>
</dbReference>
<dbReference type="GO" id="GO:0099621">
    <property type="term" value="F:undecaprenyl-phosphate 4-deoxy-4-formamido-L-arabinose transferase activity"/>
    <property type="evidence" value="ECO:0007669"/>
    <property type="project" value="UniProtKB-EC"/>
</dbReference>
<dbReference type="GO" id="GO:0036108">
    <property type="term" value="P:4-amino-4-deoxy-alpha-L-arabinopyranosyl undecaprenyl phosphate biosynthetic process"/>
    <property type="evidence" value="ECO:0007669"/>
    <property type="project" value="UniProtKB-UniRule"/>
</dbReference>
<dbReference type="GO" id="GO:0009245">
    <property type="term" value="P:lipid A biosynthetic process"/>
    <property type="evidence" value="ECO:0007669"/>
    <property type="project" value="UniProtKB-UniRule"/>
</dbReference>
<dbReference type="GO" id="GO:0009103">
    <property type="term" value="P:lipopolysaccharide biosynthetic process"/>
    <property type="evidence" value="ECO:0007669"/>
    <property type="project" value="UniProtKB-UniRule"/>
</dbReference>
<dbReference type="GO" id="GO:0046677">
    <property type="term" value="P:response to antibiotic"/>
    <property type="evidence" value="ECO:0007669"/>
    <property type="project" value="UniProtKB-KW"/>
</dbReference>
<dbReference type="CDD" id="cd04187">
    <property type="entry name" value="DPM1_like_bac"/>
    <property type="match status" value="1"/>
</dbReference>
<dbReference type="FunFam" id="3.90.550.10:FF:000019">
    <property type="entry name" value="Undecaprenyl-phosphate 4-deoxy-4-formamido-L-arabinose transferase"/>
    <property type="match status" value="1"/>
</dbReference>
<dbReference type="Gene3D" id="3.90.550.10">
    <property type="entry name" value="Spore Coat Polysaccharide Biosynthesis Protein SpsA, Chain A"/>
    <property type="match status" value="1"/>
</dbReference>
<dbReference type="HAMAP" id="MF_01164">
    <property type="entry name" value="ArnC_transfer"/>
    <property type="match status" value="1"/>
</dbReference>
<dbReference type="InterPro" id="IPR022857">
    <property type="entry name" value="ArnC_tfrase"/>
</dbReference>
<dbReference type="InterPro" id="IPR001173">
    <property type="entry name" value="Glyco_trans_2-like"/>
</dbReference>
<dbReference type="InterPro" id="IPR050256">
    <property type="entry name" value="Glycosyltransferase_2"/>
</dbReference>
<dbReference type="InterPro" id="IPR029044">
    <property type="entry name" value="Nucleotide-diphossugar_trans"/>
</dbReference>
<dbReference type="NCBIfam" id="NF007986">
    <property type="entry name" value="PRK10714.1"/>
    <property type="match status" value="1"/>
</dbReference>
<dbReference type="PANTHER" id="PTHR48090:SF3">
    <property type="entry name" value="UNDECAPRENYL-PHOSPHATE 4-DEOXY-4-FORMAMIDO-L-ARABINOSE TRANSFERASE"/>
    <property type="match status" value="1"/>
</dbReference>
<dbReference type="PANTHER" id="PTHR48090">
    <property type="entry name" value="UNDECAPRENYL-PHOSPHATE 4-DEOXY-4-FORMAMIDO-L-ARABINOSE TRANSFERASE-RELATED"/>
    <property type="match status" value="1"/>
</dbReference>
<dbReference type="Pfam" id="PF00535">
    <property type="entry name" value="Glycos_transf_2"/>
    <property type="match status" value="1"/>
</dbReference>
<dbReference type="SUPFAM" id="SSF53448">
    <property type="entry name" value="Nucleotide-diphospho-sugar transferases"/>
    <property type="match status" value="1"/>
</dbReference>
<sequence length="327" mass="36486">MFDAAPIKKVSVVIPVYNEQESLPELIRRTTAACESLGKAWEILLIDDGSSDSSAELMVKASQEADSHIISILLNRNYGQHAAIMAGFSHVSGDLIITLDADLQNPPEEIPRLVAKADEGFDVVGTVRQNRQDSLFRKSASKIINLLIQRTTGKAMGDYGCMLRAYRRPIIDTMLRCHERSTFIPILANIFARRATEIPVHHAEREFGDSKYSFMRLINLMYDLVTCLTTTPLRLLSLLGSVIAIGGFSLSVLLIVLRLALGPQWAAEGVFMLFAVLFTFIGAQFIGMGLLGEYIGRIYNDVRARPRYFVQQVIYPESTPFTEESHQ</sequence>
<name>ARNC_SALEP</name>